<comment type="similarity">
    <text evidence="1">Belongs to the PPR family. PCMP-H subfamily.</text>
</comment>
<comment type="sequence caution" evidence="1">
    <conflict type="erroneous gene model prediction">
        <sequence resource="EMBL-CDS" id="CAB61996"/>
    </conflict>
    <text>The predicted gene has been split into 2 genes: At3g49140 and At3g49142.</text>
</comment>
<comment type="online information" name="Pentatricopeptide repeat proteins">
    <link uri="https://ppr.plantenergy.uwa.edu.au"/>
</comment>
<proteinExistence type="inferred from homology"/>
<gene>
    <name type="primary">PCMP-H77</name>
    <name type="ordered locus">At3g49142</name>
    <name type="ORF">F2K15.2</name>
    <name type="ORF">T2J13.20</name>
</gene>
<name>PP271_ARATH</name>
<protein>
    <recommendedName>
        <fullName>Putative pentatricopeptide repeat-containing protein At3g49142</fullName>
    </recommendedName>
</protein>
<sequence>MKRINVDLHLLHFPKFRKFQSRKVSSSLPKLELDQKSPQETVFLLGQVLDTYPDIRTLRTVHSRIILEDLRCNSSLGVKLMRAYASLKDVASARKVFDEIPERNVIIINVMIRSYVNNGFYGEGVKVFGTMCGCNVRPDHYTFPCVLKACSCSGTIVIGRKIHGSATKVGLSSTLFVGNGLVSMYGKCGFLSEARLVLDEMSRRDVVSWNSLVVGYAQNQRFDDALEVCREMESVKISHDAGTMASLLPAVSNTTTENVMYVKDMFFKMGKKSLVSWNVMIGVYMKNAMPVEAVELYSRMEADGFEPDAVSITSVLPACGDTSALSLGKKIHGYIERKKLIPNLLLENALIDMYAKCGCLEKARDVFENMKSRDVVSWTAMISAYGFSGRGCDAVALFSKLQDSGLVPDSIAFVTTLAACSHAGLLEEGRSCFKLMTDHYKITPRLEHLACMVDLLGRAGKVKEAYRFIQDMSMEPNERVWGALLGACRVHSDTDIGLLAADKLFQLAPEQSGYYVLLSNIYAKAGRWEEVTNIRNIMKSKGLKKNPGASNVEVNRIIHTFLVGDRSHPQSDEIYRELDVLVKKMKELGYVPDSESALHDVEEEDKETHLAVHSEKLAIVFALMNTKEEEEDSNNTIRITKNLRICGDCHVAAKLISQITSREIIIRDTNRFHVFRFGVCSCGDYW</sequence>
<dbReference type="EMBL" id="AL132956">
    <property type="status" value="NOT_ANNOTATED_CDS"/>
    <property type="molecule type" value="Genomic_DNA"/>
</dbReference>
<dbReference type="EMBL" id="AL132967">
    <property type="protein sequence ID" value="CAB61996.1"/>
    <property type="status" value="ALT_SEQ"/>
    <property type="molecule type" value="Genomic_DNA"/>
</dbReference>
<dbReference type="EMBL" id="CP002686">
    <property type="protein sequence ID" value="AEE78504.1"/>
    <property type="molecule type" value="Genomic_DNA"/>
</dbReference>
<dbReference type="PIR" id="T46116">
    <property type="entry name" value="T46116"/>
</dbReference>
<dbReference type="RefSeq" id="NP_001190038.1">
    <property type="nucleotide sequence ID" value="NM_001203109.2"/>
</dbReference>
<dbReference type="SMR" id="P0C899"/>
<dbReference type="FunCoup" id="P0C899">
    <property type="interactions" value="55"/>
</dbReference>
<dbReference type="PaxDb" id="3702-AT3G49142.1"/>
<dbReference type="ProteomicsDB" id="249193"/>
<dbReference type="EnsemblPlants" id="AT3G49142.1">
    <property type="protein sequence ID" value="AT3G49142.1"/>
    <property type="gene ID" value="AT3G49142"/>
</dbReference>
<dbReference type="GeneID" id="10723034"/>
<dbReference type="Gramene" id="AT3G49142.1">
    <property type="protein sequence ID" value="AT3G49142.1"/>
    <property type="gene ID" value="AT3G49142"/>
</dbReference>
<dbReference type="KEGG" id="ath:AT3G49142"/>
<dbReference type="Araport" id="AT3G49142"/>
<dbReference type="TAIR" id="AT3G49142"/>
<dbReference type="eggNOG" id="KOG4197">
    <property type="taxonomic scope" value="Eukaryota"/>
</dbReference>
<dbReference type="HOGENOM" id="CLU_002706_0_6_1"/>
<dbReference type="InParanoid" id="P0C899"/>
<dbReference type="OMA" id="EPNERIW"/>
<dbReference type="PhylomeDB" id="P0C899"/>
<dbReference type="PRO" id="PR:P0C899"/>
<dbReference type="Proteomes" id="UP000006548">
    <property type="component" value="Chromosome 3"/>
</dbReference>
<dbReference type="ExpressionAtlas" id="P0C899">
    <property type="expression patterns" value="baseline and differential"/>
</dbReference>
<dbReference type="GO" id="GO:0003723">
    <property type="term" value="F:RNA binding"/>
    <property type="evidence" value="ECO:0007669"/>
    <property type="project" value="InterPro"/>
</dbReference>
<dbReference type="GO" id="GO:0008270">
    <property type="term" value="F:zinc ion binding"/>
    <property type="evidence" value="ECO:0007669"/>
    <property type="project" value="InterPro"/>
</dbReference>
<dbReference type="GO" id="GO:0009451">
    <property type="term" value="P:RNA modification"/>
    <property type="evidence" value="ECO:0007669"/>
    <property type="project" value="InterPro"/>
</dbReference>
<dbReference type="FunFam" id="1.25.40.10:FF:002148">
    <property type="entry name" value="Pentatricopeptide repeat-containing protein At2g29760, chloroplastic"/>
    <property type="match status" value="1"/>
</dbReference>
<dbReference type="FunFam" id="1.25.40.10:FF:000685">
    <property type="entry name" value="Putative pentatricopeptide repeat-containing protein"/>
    <property type="match status" value="1"/>
</dbReference>
<dbReference type="FunFam" id="1.25.40.10:FF:001157">
    <property type="entry name" value="Putative pentatricopeptide repeat-containing protein"/>
    <property type="match status" value="1"/>
</dbReference>
<dbReference type="FunFam" id="1.25.40.10:FF:001677">
    <property type="entry name" value="Putative pentatricopeptide repeat-containing protein At3g49142"/>
    <property type="match status" value="1"/>
</dbReference>
<dbReference type="Gene3D" id="1.25.40.10">
    <property type="entry name" value="Tetratricopeptide repeat domain"/>
    <property type="match status" value="4"/>
</dbReference>
<dbReference type="InterPro" id="IPR032867">
    <property type="entry name" value="DYW_dom"/>
</dbReference>
<dbReference type="InterPro" id="IPR046848">
    <property type="entry name" value="E_motif"/>
</dbReference>
<dbReference type="InterPro" id="IPR046849">
    <property type="entry name" value="Eplus_motif"/>
</dbReference>
<dbReference type="InterPro" id="IPR002885">
    <property type="entry name" value="Pentatricopeptide_rpt"/>
</dbReference>
<dbReference type="InterPro" id="IPR046960">
    <property type="entry name" value="PPR_At4g14850-like_plant"/>
</dbReference>
<dbReference type="InterPro" id="IPR011990">
    <property type="entry name" value="TPR-like_helical_dom_sf"/>
</dbReference>
<dbReference type="NCBIfam" id="TIGR00756">
    <property type="entry name" value="PPR"/>
    <property type="match status" value="4"/>
</dbReference>
<dbReference type="PANTHER" id="PTHR47926">
    <property type="entry name" value="PENTATRICOPEPTIDE REPEAT-CONTAINING PROTEIN"/>
    <property type="match status" value="1"/>
</dbReference>
<dbReference type="PANTHER" id="PTHR47926:SF373">
    <property type="entry name" value="TETRATRICOPEPTIDE-LIKE HELICAL DOMAIN SUPERFAMILY, DYW DOMAIN-CONTAINING PROTEIN"/>
    <property type="match status" value="1"/>
</dbReference>
<dbReference type="Pfam" id="PF14432">
    <property type="entry name" value="DYW_deaminase"/>
    <property type="match status" value="1"/>
</dbReference>
<dbReference type="Pfam" id="PF20431">
    <property type="entry name" value="E_motif"/>
    <property type="match status" value="1"/>
</dbReference>
<dbReference type="Pfam" id="PF20430">
    <property type="entry name" value="Eplus_motif"/>
    <property type="match status" value="1"/>
</dbReference>
<dbReference type="Pfam" id="PF01535">
    <property type="entry name" value="PPR"/>
    <property type="match status" value="6"/>
</dbReference>
<dbReference type="Pfam" id="PF13041">
    <property type="entry name" value="PPR_2"/>
    <property type="match status" value="2"/>
</dbReference>
<dbReference type="PROSITE" id="PS51375">
    <property type="entry name" value="PPR"/>
    <property type="match status" value="12"/>
</dbReference>
<organism>
    <name type="scientific">Arabidopsis thaliana</name>
    <name type="common">Mouse-ear cress</name>
    <dbReference type="NCBI Taxonomy" id="3702"/>
    <lineage>
        <taxon>Eukaryota</taxon>
        <taxon>Viridiplantae</taxon>
        <taxon>Streptophyta</taxon>
        <taxon>Embryophyta</taxon>
        <taxon>Tracheophyta</taxon>
        <taxon>Spermatophyta</taxon>
        <taxon>Magnoliopsida</taxon>
        <taxon>eudicotyledons</taxon>
        <taxon>Gunneridae</taxon>
        <taxon>Pentapetalae</taxon>
        <taxon>rosids</taxon>
        <taxon>malvids</taxon>
        <taxon>Brassicales</taxon>
        <taxon>Brassicaceae</taxon>
        <taxon>Camelineae</taxon>
        <taxon>Arabidopsis</taxon>
    </lineage>
</organism>
<reference key="1">
    <citation type="journal article" date="2000" name="Nature">
        <title>Sequence and analysis of chromosome 3 of the plant Arabidopsis thaliana.</title>
        <authorList>
            <person name="Salanoubat M."/>
            <person name="Lemcke K."/>
            <person name="Rieger M."/>
            <person name="Ansorge W."/>
            <person name="Unseld M."/>
            <person name="Fartmann B."/>
            <person name="Valle G."/>
            <person name="Bloecker H."/>
            <person name="Perez-Alonso M."/>
            <person name="Obermaier B."/>
            <person name="Delseny M."/>
            <person name="Boutry M."/>
            <person name="Grivell L.A."/>
            <person name="Mache R."/>
            <person name="Puigdomenech P."/>
            <person name="De Simone V."/>
            <person name="Choisne N."/>
            <person name="Artiguenave F."/>
            <person name="Robert C."/>
            <person name="Brottier P."/>
            <person name="Wincker P."/>
            <person name="Cattolico L."/>
            <person name="Weissenbach J."/>
            <person name="Saurin W."/>
            <person name="Quetier F."/>
            <person name="Schaefer M."/>
            <person name="Mueller-Auer S."/>
            <person name="Gabel C."/>
            <person name="Fuchs M."/>
            <person name="Benes V."/>
            <person name="Wurmbach E."/>
            <person name="Drzonek H."/>
            <person name="Erfle H."/>
            <person name="Jordan N."/>
            <person name="Bangert S."/>
            <person name="Wiedelmann R."/>
            <person name="Kranz H."/>
            <person name="Voss H."/>
            <person name="Holland R."/>
            <person name="Brandt P."/>
            <person name="Nyakatura G."/>
            <person name="Vezzi A."/>
            <person name="D'Angelo M."/>
            <person name="Pallavicini A."/>
            <person name="Toppo S."/>
            <person name="Simionati B."/>
            <person name="Conrad A."/>
            <person name="Hornischer K."/>
            <person name="Kauer G."/>
            <person name="Loehnert T.-H."/>
            <person name="Nordsiek G."/>
            <person name="Reichelt J."/>
            <person name="Scharfe M."/>
            <person name="Schoen O."/>
            <person name="Bargues M."/>
            <person name="Terol J."/>
            <person name="Climent J."/>
            <person name="Navarro P."/>
            <person name="Collado C."/>
            <person name="Perez-Perez A."/>
            <person name="Ottenwaelder B."/>
            <person name="Duchemin D."/>
            <person name="Cooke R."/>
            <person name="Laudie M."/>
            <person name="Berger-Llauro C."/>
            <person name="Purnelle B."/>
            <person name="Masuy D."/>
            <person name="de Haan M."/>
            <person name="Maarse A.C."/>
            <person name="Alcaraz J.-P."/>
            <person name="Cottet A."/>
            <person name="Casacuberta E."/>
            <person name="Monfort A."/>
            <person name="Argiriou A."/>
            <person name="Flores M."/>
            <person name="Liguori R."/>
            <person name="Vitale D."/>
            <person name="Mannhaupt G."/>
            <person name="Haase D."/>
            <person name="Schoof H."/>
            <person name="Rudd S."/>
            <person name="Zaccaria P."/>
            <person name="Mewes H.-W."/>
            <person name="Mayer K.F.X."/>
            <person name="Kaul S."/>
            <person name="Town C.D."/>
            <person name="Koo H.L."/>
            <person name="Tallon L.J."/>
            <person name="Jenkins J."/>
            <person name="Rooney T."/>
            <person name="Rizzo M."/>
            <person name="Walts A."/>
            <person name="Utterback T."/>
            <person name="Fujii C.Y."/>
            <person name="Shea T.P."/>
            <person name="Creasy T.H."/>
            <person name="Haas B."/>
            <person name="Maiti R."/>
            <person name="Wu D."/>
            <person name="Peterson J."/>
            <person name="Van Aken S."/>
            <person name="Pai G."/>
            <person name="Militscher J."/>
            <person name="Sellers P."/>
            <person name="Gill J.E."/>
            <person name="Feldblyum T.V."/>
            <person name="Preuss D."/>
            <person name="Lin X."/>
            <person name="Nierman W.C."/>
            <person name="Salzberg S.L."/>
            <person name="White O."/>
            <person name="Venter J.C."/>
            <person name="Fraser C.M."/>
            <person name="Kaneko T."/>
            <person name="Nakamura Y."/>
            <person name="Sato S."/>
            <person name="Kato T."/>
            <person name="Asamizu E."/>
            <person name="Sasamoto S."/>
            <person name="Kimura T."/>
            <person name="Idesawa K."/>
            <person name="Kawashima K."/>
            <person name="Kishida Y."/>
            <person name="Kiyokawa C."/>
            <person name="Kohara M."/>
            <person name="Matsumoto M."/>
            <person name="Matsuno A."/>
            <person name="Muraki A."/>
            <person name="Nakayama S."/>
            <person name="Nakazaki N."/>
            <person name="Shinpo S."/>
            <person name="Takeuchi C."/>
            <person name="Wada T."/>
            <person name="Watanabe A."/>
            <person name="Yamada M."/>
            <person name="Yasuda M."/>
            <person name="Tabata S."/>
        </authorList>
    </citation>
    <scope>NUCLEOTIDE SEQUENCE [LARGE SCALE GENOMIC DNA]</scope>
    <source>
        <strain>cv. Columbia</strain>
    </source>
</reference>
<reference key="2">
    <citation type="journal article" date="2017" name="Plant J.">
        <title>Araport11: a complete reannotation of the Arabidopsis thaliana reference genome.</title>
        <authorList>
            <person name="Cheng C.Y."/>
            <person name="Krishnakumar V."/>
            <person name="Chan A.P."/>
            <person name="Thibaud-Nissen F."/>
            <person name="Schobel S."/>
            <person name="Town C.D."/>
        </authorList>
    </citation>
    <scope>GENOME REANNOTATION</scope>
    <source>
        <strain>cv. Columbia</strain>
    </source>
</reference>
<reference key="3">
    <citation type="journal article" date="2004" name="Plant Cell">
        <title>Genome-wide analysis of Arabidopsis pentatricopeptide repeat proteins reveals their essential role in organelle biogenesis.</title>
        <authorList>
            <person name="Lurin C."/>
            <person name="Andres C."/>
            <person name="Aubourg S."/>
            <person name="Bellaoui M."/>
            <person name="Bitton F."/>
            <person name="Bruyere C."/>
            <person name="Caboche M."/>
            <person name="Debast C."/>
            <person name="Gualberto J."/>
            <person name="Hoffmann B."/>
            <person name="Lecharny A."/>
            <person name="Le Ret M."/>
            <person name="Martin-Magniette M.-L."/>
            <person name="Mireau H."/>
            <person name="Peeters N."/>
            <person name="Renou J.-P."/>
            <person name="Szurek B."/>
            <person name="Taconnat L."/>
            <person name="Small I."/>
        </authorList>
    </citation>
    <scope>GENE FAMILY</scope>
</reference>
<feature type="chain" id="PRO_0000356130" description="Putative pentatricopeptide repeat-containing protein At3g49142">
    <location>
        <begin position="1"/>
        <end position="686"/>
    </location>
</feature>
<feature type="repeat" description="PPR 1">
    <location>
        <begin position="73"/>
        <end position="103"/>
    </location>
</feature>
<feature type="repeat" description="PPR 2">
    <location>
        <begin position="104"/>
        <end position="138"/>
    </location>
</feature>
<feature type="repeat" description="PPR 3">
    <location>
        <begin position="139"/>
        <end position="173"/>
    </location>
</feature>
<feature type="repeat" description="PPR 4">
    <location>
        <begin position="174"/>
        <end position="204"/>
    </location>
</feature>
<feature type="repeat" description="PPR 5">
    <location>
        <begin position="205"/>
        <end position="239"/>
    </location>
</feature>
<feature type="repeat" description="PPR 6">
    <location>
        <begin position="240"/>
        <end position="272"/>
    </location>
</feature>
<feature type="repeat" description="PPR 7">
    <location>
        <begin position="273"/>
        <end position="307"/>
    </location>
</feature>
<feature type="repeat" description="PPR 8">
    <location>
        <begin position="308"/>
        <end position="342"/>
    </location>
</feature>
<feature type="repeat" description="PPR 9">
    <location>
        <begin position="343"/>
        <end position="373"/>
    </location>
</feature>
<feature type="repeat" description="PPR 10">
    <location>
        <begin position="374"/>
        <end position="408"/>
    </location>
</feature>
<feature type="repeat" description="PPR 11">
    <location>
        <begin position="409"/>
        <end position="439"/>
    </location>
</feature>
<feature type="repeat" description="PPR 12">
    <location>
        <begin position="445"/>
        <end position="475"/>
    </location>
</feature>
<feature type="region of interest" description="Type E motif">
    <location>
        <begin position="480"/>
        <end position="555"/>
    </location>
</feature>
<feature type="region of interest" description="Type E(+) motif">
    <location>
        <begin position="556"/>
        <end position="586"/>
    </location>
</feature>
<feature type="region of interest" description="Type DYW motif">
    <location>
        <begin position="587"/>
        <end position="686"/>
    </location>
</feature>
<keyword id="KW-1185">Reference proteome</keyword>
<keyword id="KW-0677">Repeat</keyword>
<evidence type="ECO:0000305" key="1"/>
<accession>P0C899</accession>
<accession>Q9SMV0</accession>